<proteinExistence type="predicted"/>
<gene>
    <name type="ORF">D ORF F</name>
</gene>
<organism>
    <name type="scientific">Vaccinia virus (strain Copenhagen)</name>
    <name type="common">VACV</name>
    <dbReference type="NCBI Taxonomy" id="10249"/>
    <lineage>
        <taxon>Viruses</taxon>
        <taxon>Varidnaviria</taxon>
        <taxon>Bamfordvirae</taxon>
        <taxon>Nucleocytoviricota</taxon>
        <taxon>Pokkesviricetes</taxon>
        <taxon>Chitovirales</taxon>
        <taxon>Poxviridae</taxon>
        <taxon>Chordopoxvirinae</taxon>
        <taxon>Orthopoxvirus</taxon>
        <taxon>Vaccinia virus</taxon>
    </lineage>
</organism>
<accession>P68483</accession>
<accession>P04314</accession>
<name>YVDF_VACCC</name>
<feature type="chain" id="PRO_0000099694" description="Uncharacterized 7.7 kDa protein">
    <location>
        <begin position="1"/>
        <end position="69"/>
    </location>
</feature>
<dbReference type="EMBL" id="M35027">
    <property type="protein sequence ID" value="AAA48111.1"/>
    <property type="molecule type" value="Genomic_DNA"/>
</dbReference>
<dbReference type="PIR" id="A03888">
    <property type="entry name" value="QQVZ18"/>
</dbReference>
<dbReference type="Proteomes" id="UP000008269">
    <property type="component" value="Segment"/>
</dbReference>
<organismHost>
    <name type="scientific">Homo sapiens</name>
    <name type="common">Human</name>
    <dbReference type="NCBI Taxonomy" id="9606"/>
</organismHost>
<protein>
    <recommendedName>
        <fullName>Uncharacterized 7.7 kDa protein</fullName>
    </recommendedName>
</protein>
<keyword id="KW-1185">Reference proteome</keyword>
<sequence>MKISLIEKKLIPSPPLEENTHVLMHSPLVFDSWLNSATALILVSFVLDENSILEIPKTLKYSNKISIPD</sequence>
<reference key="1">
    <citation type="journal article" date="1990" name="Virology">
        <title>The complete DNA sequence of vaccinia virus.</title>
        <authorList>
            <person name="Goebel S.J."/>
            <person name="Johnson G.P."/>
            <person name="Perkus M.E."/>
            <person name="Davis S.W."/>
            <person name="Winslow J.P."/>
            <person name="Paoletti E."/>
        </authorList>
    </citation>
    <scope>NUCLEOTIDE SEQUENCE [LARGE SCALE GENOMIC DNA]</scope>
</reference>
<reference key="2">
    <citation type="journal article" date="1990" name="Virology">
        <title>Appendix to 'The complete DNA sequence of vaccinia virus'.</title>
        <authorList>
            <person name="Goebel S.J."/>
            <person name="Johnson G.P."/>
            <person name="Perkus M.E."/>
            <person name="Davis S.W."/>
            <person name="Winslow J.P."/>
            <person name="Paoletti E."/>
        </authorList>
    </citation>
    <scope>COMPLETE GENOME</scope>
</reference>